<evidence type="ECO:0000255" key="1">
    <source>
        <dbReference type="HAMAP-Rule" id="MF_01197"/>
    </source>
</evidence>
<name>SEPF_CLOB1</name>
<keyword id="KW-0131">Cell cycle</keyword>
<keyword id="KW-0132">Cell division</keyword>
<keyword id="KW-0963">Cytoplasm</keyword>
<keyword id="KW-0717">Septation</keyword>
<protein>
    <recommendedName>
        <fullName evidence="1">Cell division protein SepF</fullName>
    </recommendedName>
</protein>
<dbReference type="EMBL" id="CP000726">
    <property type="protein sequence ID" value="ABS34008.1"/>
    <property type="molecule type" value="Genomic_DNA"/>
</dbReference>
<dbReference type="RefSeq" id="WP_003360699.1">
    <property type="nucleotide sequence ID" value="NC_009697.1"/>
</dbReference>
<dbReference type="SMR" id="A7FQ31"/>
<dbReference type="GeneID" id="5185721"/>
<dbReference type="KEGG" id="cba:CLB_1491"/>
<dbReference type="HOGENOM" id="CLU_078499_4_0_9"/>
<dbReference type="GO" id="GO:0005737">
    <property type="term" value="C:cytoplasm"/>
    <property type="evidence" value="ECO:0007669"/>
    <property type="project" value="UniProtKB-SubCell"/>
</dbReference>
<dbReference type="GO" id="GO:0000917">
    <property type="term" value="P:division septum assembly"/>
    <property type="evidence" value="ECO:0007669"/>
    <property type="project" value="UniProtKB-KW"/>
</dbReference>
<dbReference type="GO" id="GO:0043093">
    <property type="term" value="P:FtsZ-dependent cytokinesis"/>
    <property type="evidence" value="ECO:0007669"/>
    <property type="project" value="UniProtKB-UniRule"/>
</dbReference>
<dbReference type="Gene3D" id="3.30.110.150">
    <property type="entry name" value="SepF-like protein"/>
    <property type="match status" value="1"/>
</dbReference>
<dbReference type="HAMAP" id="MF_01197">
    <property type="entry name" value="SepF"/>
    <property type="match status" value="1"/>
</dbReference>
<dbReference type="InterPro" id="IPR023052">
    <property type="entry name" value="Cell_div_SepF"/>
</dbReference>
<dbReference type="InterPro" id="IPR007561">
    <property type="entry name" value="Cell_div_SepF/SepF-rel"/>
</dbReference>
<dbReference type="InterPro" id="IPR038594">
    <property type="entry name" value="SepF-like_sf"/>
</dbReference>
<dbReference type="PANTHER" id="PTHR35798">
    <property type="entry name" value="CELL DIVISION PROTEIN SEPF"/>
    <property type="match status" value="1"/>
</dbReference>
<dbReference type="PANTHER" id="PTHR35798:SF1">
    <property type="entry name" value="CELL DIVISION PROTEIN SEPF"/>
    <property type="match status" value="1"/>
</dbReference>
<dbReference type="Pfam" id="PF04472">
    <property type="entry name" value="SepF"/>
    <property type="match status" value="1"/>
</dbReference>
<reference key="1">
    <citation type="journal article" date="2007" name="PLoS ONE">
        <title>Analysis of the neurotoxin complex genes in Clostridium botulinum A1-A4 and B1 strains: BoNT/A3, /Ba4 and /B1 clusters are located within plasmids.</title>
        <authorList>
            <person name="Smith T.J."/>
            <person name="Hill K.K."/>
            <person name="Foley B.T."/>
            <person name="Detter J.C."/>
            <person name="Munk A.C."/>
            <person name="Bruce D.C."/>
            <person name="Doggett N.A."/>
            <person name="Smith L.A."/>
            <person name="Marks J.D."/>
            <person name="Xie G."/>
            <person name="Brettin T.S."/>
        </authorList>
    </citation>
    <scope>NUCLEOTIDE SEQUENCE [LARGE SCALE GENOMIC DNA]</scope>
    <source>
        <strain>ATCC 19397 / Type A</strain>
    </source>
</reference>
<comment type="function">
    <text evidence="1">Cell division protein that is part of the divisome complex and is recruited early to the Z-ring. Probably stimulates Z-ring formation, perhaps through the cross-linking of FtsZ protofilaments. Its function overlaps with FtsA.</text>
</comment>
<comment type="subunit">
    <text evidence="1">Homodimer. Interacts with FtsZ.</text>
</comment>
<comment type="subcellular location">
    <subcellularLocation>
        <location evidence="1">Cytoplasm</location>
    </subcellularLocation>
    <text evidence="1">Localizes to the division site, in a FtsZ-dependent manner.</text>
</comment>
<comment type="similarity">
    <text evidence="1">Belongs to the SepF family.</text>
</comment>
<accession>A7FQ31</accession>
<feature type="chain" id="PRO_1000138464" description="Cell division protein SepF">
    <location>
        <begin position="1"/>
        <end position="150"/>
    </location>
</feature>
<proteinExistence type="inferred from homology"/>
<gene>
    <name evidence="1" type="primary">sepF</name>
    <name type="ordered locus">CLB_1491</name>
</gene>
<sequence length="150" mass="16561">MSGKILDKMAGLLGLEDDLEEDLEEVEEETAEEEVTPLISSNTKRNNKVVSIHTAVSAKVKIIKPCSYEEAVDICDELKNRKIIIVNTTDLETKIAQRLLDFMGGASYALGGSLEEVEKSVYILAPSTVEVTNELKSQLISSKGIFNWNK</sequence>
<organism>
    <name type="scientific">Clostridium botulinum (strain ATCC 19397 / Type A)</name>
    <dbReference type="NCBI Taxonomy" id="441770"/>
    <lineage>
        <taxon>Bacteria</taxon>
        <taxon>Bacillati</taxon>
        <taxon>Bacillota</taxon>
        <taxon>Clostridia</taxon>
        <taxon>Eubacteriales</taxon>
        <taxon>Clostridiaceae</taxon>
        <taxon>Clostridium</taxon>
    </lineage>
</organism>